<accession>A1RNR8</accession>
<keyword id="KW-1003">Cell membrane</keyword>
<keyword id="KW-0472">Membrane</keyword>
<keyword id="KW-0812">Transmembrane</keyword>
<keyword id="KW-1133">Transmembrane helix</keyword>
<dbReference type="EMBL" id="CP000503">
    <property type="protein sequence ID" value="ABM26313.1"/>
    <property type="molecule type" value="Genomic_DNA"/>
</dbReference>
<dbReference type="RefSeq" id="WP_011790746.1">
    <property type="nucleotide sequence ID" value="NC_008750.1"/>
</dbReference>
<dbReference type="KEGG" id="shw:Sputw3181_3501"/>
<dbReference type="HOGENOM" id="CLU_097887_1_1_6"/>
<dbReference type="Proteomes" id="UP000002597">
    <property type="component" value="Chromosome"/>
</dbReference>
<dbReference type="GO" id="GO:0005886">
    <property type="term" value="C:plasma membrane"/>
    <property type="evidence" value="ECO:0007669"/>
    <property type="project" value="UniProtKB-SubCell"/>
</dbReference>
<dbReference type="HAMAP" id="MF_00143">
    <property type="entry name" value="UPF0114"/>
    <property type="match status" value="1"/>
</dbReference>
<dbReference type="InterPro" id="IPR005134">
    <property type="entry name" value="UPF0114"/>
</dbReference>
<dbReference type="InterPro" id="IPR020761">
    <property type="entry name" value="UPF0114_bac"/>
</dbReference>
<dbReference type="NCBIfam" id="TIGR00645">
    <property type="entry name" value="HI0507"/>
    <property type="match status" value="1"/>
</dbReference>
<dbReference type="PANTHER" id="PTHR38596">
    <property type="entry name" value="UPF0114 PROTEIN YQHA"/>
    <property type="match status" value="1"/>
</dbReference>
<dbReference type="PANTHER" id="PTHR38596:SF1">
    <property type="entry name" value="UPF0114 PROTEIN YQHA"/>
    <property type="match status" value="1"/>
</dbReference>
<dbReference type="Pfam" id="PF03350">
    <property type="entry name" value="UPF0114"/>
    <property type="match status" value="1"/>
</dbReference>
<comment type="subcellular location">
    <subcellularLocation>
        <location evidence="1">Cell membrane</location>
        <topology evidence="1">Multi-pass membrane protein</topology>
    </subcellularLocation>
</comment>
<comment type="similarity">
    <text evidence="1">Belongs to the UPF0114 family.</text>
</comment>
<reference key="1">
    <citation type="submission" date="2006-12" db="EMBL/GenBank/DDBJ databases">
        <title>Complete sequence of Shewanella sp. W3-18-1.</title>
        <authorList>
            <consortium name="US DOE Joint Genome Institute"/>
            <person name="Copeland A."/>
            <person name="Lucas S."/>
            <person name="Lapidus A."/>
            <person name="Barry K."/>
            <person name="Detter J.C."/>
            <person name="Glavina del Rio T."/>
            <person name="Hammon N."/>
            <person name="Israni S."/>
            <person name="Dalin E."/>
            <person name="Tice H."/>
            <person name="Pitluck S."/>
            <person name="Chain P."/>
            <person name="Malfatti S."/>
            <person name="Shin M."/>
            <person name="Vergez L."/>
            <person name="Schmutz J."/>
            <person name="Larimer F."/>
            <person name="Land M."/>
            <person name="Hauser L."/>
            <person name="Kyrpides N."/>
            <person name="Lykidis A."/>
            <person name="Tiedje J."/>
            <person name="Richardson P."/>
        </authorList>
    </citation>
    <scope>NUCLEOTIDE SEQUENCE [LARGE SCALE GENOMIC DNA]</scope>
    <source>
        <strain>W3-18-1</strain>
    </source>
</reference>
<gene>
    <name type="ordered locus">Sputw3181_3501</name>
</gene>
<name>Y3501_SHESW</name>
<protein>
    <recommendedName>
        <fullName evidence="1">UPF0114 protein Sputw3181_3501</fullName>
    </recommendedName>
</protein>
<sequence length="162" mass="18410">MEKIFERLMYASRWIMAPIYLGLSLVLLGLGIKFFQEIFHVLPIIFEMREVDLVLVTLSLIDITLVGGLIVMVMFSGYENFVSQLDVGEDSEKLSWLGKLDSGSLKNKVAASIVAISSIHLLKIFMNVENISNDKIMWYLLIHITFVLSAFAMGYLDKITRK</sequence>
<proteinExistence type="inferred from homology"/>
<feature type="chain" id="PRO_1000009498" description="UPF0114 protein Sputw3181_3501">
    <location>
        <begin position="1"/>
        <end position="162"/>
    </location>
</feature>
<feature type="transmembrane region" description="Helical" evidence="1">
    <location>
        <begin position="15"/>
        <end position="35"/>
    </location>
</feature>
<feature type="transmembrane region" description="Helical" evidence="1">
    <location>
        <begin position="53"/>
        <end position="73"/>
    </location>
</feature>
<feature type="transmembrane region" description="Helical" evidence="1">
    <location>
        <begin position="136"/>
        <end position="156"/>
    </location>
</feature>
<evidence type="ECO:0000255" key="1">
    <source>
        <dbReference type="HAMAP-Rule" id="MF_00143"/>
    </source>
</evidence>
<organism>
    <name type="scientific">Shewanella sp. (strain W3-18-1)</name>
    <dbReference type="NCBI Taxonomy" id="351745"/>
    <lineage>
        <taxon>Bacteria</taxon>
        <taxon>Pseudomonadati</taxon>
        <taxon>Pseudomonadota</taxon>
        <taxon>Gammaproteobacteria</taxon>
        <taxon>Alteromonadales</taxon>
        <taxon>Shewanellaceae</taxon>
        <taxon>Shewanella</taxon>
    </lineage>
</organism>